<reference key="1">
    <citation type="journal article" date="2008" name="Nat. Biotechnol.">
        <title>Genome sequencing and analysis of the filamentous fungus Penicillium chrysogenum.</title>
        <authorList>
            <person name="van den Berg M.A."/>
            <person name="Albang R."/>
            <person name="Albermann K."/>
            <person name="Badger J.H."/>
            <person name="Daran J.-M."/>
            <person name="Driessen A.J.M."/>
            <person name="Garcia-Estrada C."/>
            <person name="Fedorova N.D."/>
            <person name="Harris D.M."/>
            <person name="Heijne W.H.M."/>
            <person name="Joardar V.S."/>
            <person name="Kiel J.A.K.W."/>
            <person name="Kovalchuk A."/>
            <person name="Martin J.F."/>
            <person name="Nierman W.C."/>
            <person name="Nijland J.G."/>
            <person name="Pronk J.T."/>
            <person name="Roubos J.A."/>
            <person name="van der Klei I.J."/>
            <person name="van Peij N.N.M.E."/>
            <person name="Veenhuis M."/>
            <person name="von Doehren H."/>
            <person name="Wagner C."/>
            <person name="Wortman J.R."/>
            <person name="Bovenberg R.A.L."/>
        </authorList>
    </citation>
    <scope>NUCLEOTIDE SEQUENCE [LARGE SCALE GENOMIC DNA]</scope>
    <source>
        <strain>ATCC 28089 / DSM 1075 / NRRL 1951 / Wisconsin 54-1255</strain>
    </source>
</reference>
<reference key="2">
    <citation type="journal article" date="2014" name="Fungal Genet. Biol.">
        <title>Molecular characterization of the PR-toxin gene cluster in Penicillium roqueforti and Penicillium chrysogenum: cross talk of secondary metabolite pathways.</title>
        <authorList>
            <person name="Hidalgo P.I."/>
            <person name="Ullan R.V."/>
            <person name="Albillos S.M."/>
            <person name="Montero O."/>
            <person name="Fernandez-Bodega M.A."/>
            <person name="Garcia-Estrada C."/>
            <person name="Fernandez-Aguado M."/>
            <person name="Martin J.F."/>
        </authorList>
    </citation>
    <scope>FUNCTION</scope>
    <scope>INDUCTION</scope>
    <scope>PATHWAY</scope>
</reference>
<proteinExistence type="evidence at transcript level"/>
<sequence length="166" mass="18843">MIPLRCSSAYSLLIEYCATIRDPCEETYTSRGDHNLSISISLFDQKLEQFHVSLSHATVLVNQSLLPNDACPIQPGILRAISVDAKNLPCVDFPHLCRARGGCLAHHIEYEFVPFAYTERGDTEYMIVVETLGDDADIQFRKFIVMYQRIIAATWKHLCPQTFDCL</sequence>
<organism>
    <name type="scientific">Penicillium rubens (strain ATCC 28089 / DSM 1075 / NRRL 1951 / Wisconsin 54-1255)</name>
    <name type="common">Penicillium chrysogenum</name>
    <dbReference type="NCBI Taxonomy" id="500485"/>
    <lineage>
        <taxon>Eukaryota</taxon>
        <taxon>Fungi</taxon>
        <taxon>Dikarya</taxon>
        <taxon>Ascomycota</taxon>
        <taxon>Pezizomycotina</taxon>
        <taxon>Eurotiomycetes</taxon>
        <taxon>Eurotiomycetidae</taxon>
        <taxon>Eurotiales</taxon>
        <taxon>Aspergillaceae</taxon>
        <taxon>Penicillium</taxon>
        <taxon>Penicillium chrysogenum species complex</taxon>
    </lineage>
</organism>
<evidence type="ECO:0000250" key="1">
    <source>
        <dbReference type="UniProtKB" id="W6Q3Z9"/>
    </source>
</evidence>
<evidence type="ECO:0000250" key="2">
    <source>
        <dbReference type="UniProtKB" id="W6QB15"/>
    </source>
</evidence>
<evidence type="ECO:0000250" key="3">
    <source>
        <dbReference type="UniProtKB" id="W6QP10"/>
    </source>
</evidence>
<evidence type="ECO:0000269" key="4">
    <source>
    </source>
</evidence>
<evidence type="ECO:0000303" key="5">
    <source>
    </source>
</evidence>
<keyword id="KW-1185">Reference proteome</keyword>
<dbReference type="EMBL" id="AM920427">
    <property type="protein sequence ID" value="CAP80263.1"/>
    <property type="molecule type" value="Genomic_DNA"/>
</dbReference>
<dbReference type="RefSeq" id="XP_002557478.1">
    <property type="nucleotide sequence ID" value="XM_002557432.1"/>
</dbReference>
<dbReference type="VEuPathDB" id="FungiDB:PCH_Pc12g06360"/>
<dbReference type="HOGENOM" id="CLU_1603293_0_0_1"/>
<dbReference type="OrthoDB" id="10280228at2759"/>
<dbReference type="Proteomes" id="UP000000724">
    <property type="component" value="Contig Pc00c12"/>
</dbReference>
<feature type="chain" id="PRO_0000451232" description="PR-toxin biosynthesis cluster protein 10">
    <location>
        <begin position="1"/>
        <end position="166"/>
    </location>
</feature>
<accession>B6H068</accession>
<comment type="function">
    <text evidence="1 2 3 4">Part of the gene cluster that mediates the biosynthesis of PR-toxin, a bicyclic sesquiterpene belonging to the eremophilane class and acting as a mycotoxin (PubMed:24239699). The first step of the pathway is catalyzed by the aristolochene synthase which performs the cyclization of trans,trans-farnesyl diphosphate (FPP) to the bicyclic sesquiterpene aristolochene (PubMed:24239699). Following the formation of aristolochene, the non-oxygenated aristolochene is converted to the trioxygenated intermediate eremofortin B, via 7-epi-neopetasone (PubMed:24239699). This conversion appears to involve three enzymes, a hydroxysterol oxidase-like enzyme, the quinone-oxidase prx3 that forms the quinone-type-structure in the bicyclic nucleus of aristolochene with the C8-oxo group and the C-3 hydroxyl group, and the P450 monooxygenase prx9 that introduces the epoxide at the double bond between carbons 1 and 2 (By similarity) (PubMed:24239699). No monoxy or dioxy-intermediates have been reported to be released to the broth, so these three early oxidative reactions may be coupled together (PubMed:24239699). Eremofortin B is further oxidized by another P450 monooxygenase, that introduces a second epoxide between carbons 7 and 11 prior to acetylation to eremofortin A by the acetyltransferase prx11 (By similarity). The second epoxidation may be performed by a second P450 monooxygenase (PubMed:24239699). After the acetylation step, eremofortin A is converted to eremofortin C and then to PR-toxin (PubMed:24239699). First the conversion of eremofortin A to eremofortin C proceeds by oxidation of the side chain of the molecule at C-12 and is catalyzed by the short-chain oxidoreductase prx1 (PubMed:24239699). The cytochrome P450 monooxygenase prx8 also plays a role in this step (By similarity). The primary alcohol formed at C-12 is finally oxidized by the short-chain alcohol dehydrogenase prx4 that forms PR-toxin (PubMed:24239699).</text>
</comment>
<comment type="induction">
    <text evidence="4">Expression and the subsequent production of PR-toxin take place under static culture conditions (oxygen limited), whereas no expression of the PR-toxin genes occurs under the strongly aerated conditions required for optimal penicillin production (PubMed:24239699). There is a negative control of the transcription of the PR-toxin genes by the penicillin biosynthesis gene product(s), or by a regulatory peptide encoded by a small ORF inside the penicillin gene cluster (PubMed:24239699).</text>
</comment>
<gene>
    <name evidence="5" type="primary">prx10</name>
    <name type="ORF">Pc12g06360</name>
    <name type="ORF">PCH_Pc12g06360</name>
</gene>
<protein>
    <recommendedName>
        <fullName evidence="5">PR-toxin biosynthesis cluster protein 10</fullName>
    </recommendedName>
</protein>
<name>PRX10_PENRW</name>